<protein>
    <recommendedName>
        <fullName evidence="1">Phosphate import ATP-binding protein PstB</fullName>
        <ecNumber evidence="1">7.3.2.1</ecNumber>
    </recommendedName>
    <alternativeName>
        <fullName evidence="1">ABC phosphate transporter</fullName>
    </alternativeName>
    <alternativeName>
        <fullName evidence="1">Phosphate-transporting ATPase</fullName>
    </alternativeName>
</protein>
<name>PSTB_THEFY</name>
<organism>
    <name type="scientific">Thermobifida fusca (strain YX)</name>
    <dbReference type="NCBI Taxonomy" id="269800"/>
    <lineage>
        <taxon>Bacteria</taxon>
        <taxon>Bacillati</taxon>
        <taxon>Actinomycetota</taxon>
        <taxon>Actinomycetes</taxon>
        <taxon>Streptosporangiales</taxon>
        <taxon>Nocardiopsidaceae</taxon>
        <taxon>Thermobifida</taxon>
    </lineage>
</organism>
<proteinExistence type="inferred from homology"/>
<feature type="chain" id="PRO_0000272565" description="Phosphate import ATP-binding protein PstB">
    <location>
        <begin position="1"/>
        <end position="259"/>
    </location>
</feature>
<feature type="domain" description="ABC transporter" evidence="1">
    <location>
        <begin position="5"/>
        <end position="248"/>
    </location>
</feature>
<feature type="binding site" evidence="1">
    <location>
        <begin position="37"/>
        <end position="44"/>
    </location>
    <ligand>
        <name>ATP</name>
        <dbReference type="ChEBI" id="CHEBI:30616"/>
    </ligand>
</feature>
<gene>
    <name evidence="1" type="primary">pstB</name>
    <name type="ordered locus">Tfu_2743</name>
</gene>
<reference key="1">
    <citation type="journal article" date="2007" name="J. Bacteriol.">
        <title>Genome sequence and analysis of the soil cellulolytic actinomycete Thermobifida fusca YX.</title>
        <authorList>
            <person name="Lykidis A."/>
            <person name="Mavromatis K."/>
            <person name="Ivanova N."/>
            <person name="Anderson I."/>
            <person name="Land M."/>
            <person name="DiBartolo G."/>
            <person name="Martinez M."/>
            <person name="Lapidus A."/>
            <person name="Lucas S."/>
            <person name="Copeland A."/>
            <person name="Richardson P."/>
            <person name="Wilson D.B."/>
            <person name="Kyrpides N."/>
        </authorList>
    </citation>
    <scope>NUCLEOTIDE SEQUENCE [LARGE SCALE GENOMIC DNA]</scope>
    <source>
        <strain>YX</strain>
    </source>
</reference>
<keyword id="KW-0067">ATP-binding</keyword>
<keyword id="KW-1003">Cell membrane</keyword>
<keyword id="KW-0472">Membrane</keyword>
<keyword id="KW-0547">Nucleotide-binding</keyword>
<keyword id="KW-0592">Phosphate transport</keyword>
<keyword id="KW-1278">Translocase</keyword>
<keyword id="KW-0813">Transport</keyword>
<evidence type="ECO:0000255" key="1">
    <source>
        <dbReference type="HAMAP-Rule" id="MF_01702"/>
    </source>
</evidence>
<sequence length="259" mass="28778">MAKRIDVSGLHVYYGDFLAVEDVSMTIEPRSVTAFIGSSGCGKSTFLRTLNRMHEVTPGARVEGKVLLDDQDIYAPDVDPVEVRREVGMVFQRPNPFPTMSIYDNVIAGYKLNNRRLRKSEADEIVERSLRGANLWEEVKDRLDRPGASLSGGQQQRLCIARAIAVEPSVLLMDEPCSALDPISTLAIEDLISQLKENYTIVIVTHNMQQAARVSDVTAFFNLAGTGKPGKLIEIGETNKIFTKPEKKETENYITGRFG</sequence>
<accession>Q47L96</accession>
<comment type="function">
    <text evidence="1">Part of the ABC transporter complex PstSACB involved in phosphate import. Responsible for energy coupling to the transport system.</text>
</comment>
<comment type="catalytic activity">
    <reaction evidence="1">
        <text>phosphate(out) + ATP + H2O = ADP + 2 phosphate(in) + H(+)</text>
        <dbReference type="Rhea" id="RHEA:24440"/>
        <dbReference type="ChEBI" id="CHEBI:15377"/>
        <dbReference type="ChEBI" id="CHEBI:15378"/>
        <dbReference type="ChEBI" id="CHEBI:30616"/>
        <dbReference type="ChEBI" id="CHEBI:43474"/>
        <dbReference type="ChEBI" id="CHEBI:456216"/>
        <dbReference type="EC" id="7.3.2.1"/>
    </reaction>
</comment>
<comment type="subunit">
    <text evidence="1">The complex is composed of two ATP-binding proteins (PstB), two transmembrane proteins (PstC and PstA) and a solute-binding protein (PstS).</text>
</comment>
<comment type="subcellular location">
    <subcellularLocation>
        <location evidence="1">Cell membrane</location>
        <topology evidence="1">Peripheral membrane protein</topology>
    </subcellularLocation>
</comment>
<comment type="similarity">
    <text evidence="1">Belongs to the ABC transporter superfamily. Phosphate importer (TC 3.A.1.7) family.</text>
</comment>
<dbReference type="EC" id="7.3.2.1" evidence="1"/>
<dbReference type="EMBL" id="CP000088">
    <property type="protein sequence ID" value="AAZ56776.1"/>
    <property type="molecule type" value="Genomic_DNA"/>
</dbReference>
<dbReference type="RefSeq" id="WP_011293166.1">
    <property type="nucleotide sequence ID" value="NC_007333.1"/>
</dbReference>
<dbReference type="SMR" id="Q47L96"/>
<dbReference type="STRING" id="269800.Tfu_2743"/>
<dbReference type="KEGG" id="tfu:Tfu_2743"/>
<dbReference type="eggNOG" id="COG1117">
    <property type="taxonomic scope" value="Bacteria"/>
</dbReference>
<dbReference type="HOGENOM" id="CLU_000604_1_22_11"/>
<dbReference type="OrthoDB" id="7838608at2"/>
<dbReference type="GO" id="GO:0005886">
    <property type="term" value="C:plasma membrane"/>
    <property type="evidence" value="ECO:0007669"/>
    <property type="project" value="UniProtKB-SubCell"/>
</dbReference>
<dbReference type="GO" id="GO:0005524">
    <property type="term" value="F:ATP binding"/>
    <property type="evidence" value="ECO:0007669"/>
    <property type="project" value="UniProtKB-KW"/>
</dbReference>
<dbReference type="GO" id="GO:0016887">
    <property type="term" value="F:ATP hydrolysis activity"/>
    <property type="evidence" value="ECO:0007669"/>
    <property type="project" value="InterPro"/>
</dbReference>
<dbReference type="GO" id="GO:0015415">
    <property type="term" value="F:ATPase-coupled phosphate ion transmembrane transporter activity"/>
    <property type="evidence" value="ECO:0007669"/>
    <property type="project" value="UniProtKB-EC"/>
</dbReference>
<dbReference type="GO" id="GO:0035435">
    <property type="term" value="P:phosphate ion transmembrane transport"/>
    <property type="evidence" value="ECO:0007669"/>
    <property type="project" value="InterPro"/>
</dbReference>
<dbReference type="CDD" id="cd03260">
    <property type="entry name" value="ABC_PstB_phosphate_transporter"/>
    <property type="match status" value="1"/>
</dbReference>
<dbReference type="Gene3D" id="3.40.50.300">
    <property type="entry name" value="P-loop containing nucleotide triphosphate hydrolases"/>
    <property type="match status" value="1"/>
</dbReference>
<dbReference type="InterPro" id="IPR003593">
    <property type="entry name" value="AAA+_ATPase"/>
</dbReference>
<dbReference type="InterPro" id="IPR003439">
    <property type="entry name" value="ABC_transporter-like_ATP-bd"/>
</dbReference>
<dbReference type="InterPro" id="IPR017871">
    <property type="entry name" value="ABC_transporter-like_CS"/>
</dbReference>
<dbReference type="InterPro" id="IPR027417">
    <property type="entry name" value="P-loop_NTPase"/>
</dbReference>
<dbReference type="InterPro" id="IPR005670">
    <property type="entry name" value="PstB-like"/>
</dbReference>
<dbReference type="NCBIfam" id="TIGR00972">
    <property type="entry name" value="3a0107s01c2"/>
    <property type="match status" value="1"/>
</dbReference>
<dbReference type="PANTHER" id="PTHR43423">
    <property type="entry name" value="ABC TRANSPORTER I FAMILY MEMBER 17"/>
    <property type="match status" value="1"/>
</dbReference>
<dbReference type="PANTHER" id="PTHR43423:SF1">
    <property type="entry name" value="ABC TRANSPORTER I FAMILY MEMBER 17"/>
    <property type="match status" value="1"/>
</dbReference>
<dbReference type="Pfam" id="PF00005">
    <property type="entry name" value="ABC_tran"/>
    <property type="match status" value="1"/>
</dbReference>
<dbReference type="SMART" id="SM00382">
    <property type="entry name" value="AAA"/>
    <property type="match status" value="1"/>
</dbReference>
<dbReference type="SUPFAM" id="SSF52540">
    <property type="entry name" value="P-loop containing nucleoside triphosphate hydrolases"/>
    <property type="match status" value="1"/>
</dbReference>
<dbReference type="PROSITE" id="PS00211">
    <property type="entry name" value="ABC_TRANSPORTER_1"/>
    <property type="match status" value="1"/>
</dbReference>
<dbReference type="PROSITE" id="PS50893">
    <property type="entry name" value="ABC_TRANSPORTER_2"/>
    <property type="match status" value="1"/>
</dbReference>
<dbReference type="PROSITE" id="PS51238">
    <property type="entry name" value="PSTB"/>
    <property type="match status" value="1"/>
</dbReference>